<dbReference type="EC" id="7.1.1.2" evidence="1"/>
<dbReference type="EMBL" id="AP006475">
    <property type="protein sequence ID" value="BAD91794.1"/>
    <property type="molecule type" value="Genomic_DNA"/>
</dbReference>
<dbReference type="SMR" id="Q598S9"/>
<dbReference type="GO" id="GO:0005743">
    <property type="term" value="C:mitochondrial inner membrane"/>
    <property type="evidence" value="ECO:0000250"/>
    <property type="project" value="UniProtKB"/>
</dbReference>
<dbReference type="GO" id="GO:0008137">
    <property type="term" value="F:NADH dehydrogenase (ubiquinone) activity"/>
    <property type="evidence" value="ECO:0000250"/>
    <property type="project" value="UniProtKB"/>
</dbReference>
<dbReference type="GO" id="GO:0048039">
    <property type="term" value="F:ubiquinone binding"/>
    <property type="evidence" value="ECO:0007669"/>
    <property type="project" value="TreeGrafter"/>
</dbReference>
<dbReference type="GO" id="GO:0015990">
    <property type="term" value="P:electron transport coupled proton transport"/>
    <property type="evidence" value="ECO:0007669"/>
    <property type="project" value="TreeGrafter"/>
</dbReference>
<dbReference type="GO" id="GO:0006120">
    <property type="term" value="P:mitochondrial electron transport, NADH to ubiquinone"/>
    <property type="evidence" value="ECO:0000250"/>
    <property type="project" value="UniProtKB"/>
</dbReference>
<dbReference type="GO" id="GO:0032981">
    <property type="term" value="P:mitochondrial respiratory chain complex I assembly"/>
    <property type="evidence" value="ECO:0000250"/>
    <property type="project" value="UniProtKB"/>
</dbReference>
<dbReference type="InterPro" id="IPR000260">
    <property type="entry name" value="NADH4_N"/>
</dbReference>
<dbReference type="InterPro" id="IPR010227">
    <property type="entry name" value="NADH_Q_OxRdtase_chainM/4"/>
</dbReference>
<dbReference type="InterPro" id="IPR003918">
    <property type="entry name" value="NADH_UbQ_OxRdtase"/>
</dbReference>
<dbReference type="InterPro" id="IPR001750">
    <property type="entry name" value="ND/Mrp_TM"/>
</dbReference>
<dbReference type="NCBIfam" id="TIGR01972">
    <property type="entry name" value="NDH_I_M"/>
    <property type="match status" value="1"/>
</dbReference>
<dbReference type="PANTHER" id="PTHR43507">
    <property type="entry name" value="NADH-UBIQUINONE OXIDOREDUCTASE CHAIN 4"/>
    <property type="match status" value="1"/>
</dbReference>
<dbReference type="PANTHER" id="PTHR43507:SF20">
    <property type="entry name" value="NADH-UBIQUINONE OXIDOREDUCTASE CHAIN 4"/>
    <property type="match status" value="1"/>
</dbReference>
<dbReference type="Pfam" id="PF01059">
    <property type="entry name" value="Oxidored_q5_N"/>
    <property type="match status" value="1"/>
</dbReference>
<dbReference type="Pfam" id="PF00361">
    <property type="entry name" value="Proton_antipo_M"/>
    <property type="match status" value="1"/>
</dbReference>
<dbReference type="PRINTS" id="PR01437">
    <property type="entry name" value="NUOXDRDTASE4"/>
</dbReference>
<comment type="function">
    <text evidence="1">Core subunit of the mitochondrial membrane respiratory chain NADH dehydrogenase (Complex I) which catalyzes electron transfer from NADH through the respiratory chain, using ubiquinone as an electron acceptor. Essential for the catalytic activity and assembly of complex I.</text>
</comment>
<comment type="catalytic activity">
    <reaction evidence="1">
        <text>a ubiquinone + NADH + 5 H(+)(in) = a ubiquinol + NAD(+) + 4 H(+)(out)</text>
        <dbReference type="Rhea" id="RHEA:29091"/>
        <dbReference type="Rhea" id="RHEA-COMP:9565"/>
        <dbReference type="Rhea" id="RHEA-COMP:9566"/>
        <dbReference type="ChEBI" id="CHEBI:15378"/>
        <dbReference type="ChEBI" id="CHEBI:16389"/>
        <dbReference type="ChEBI" id="CHEBI:17976"/>
        <dbReference type="ChEBI" id="CHEBI:57540"/>
        <dbReference type="ChEBI" id="CHEBI:57945"/>
        <dbReference type="EC" id="7.1.1.2"/>
    </reaction>
</comment>
<comment type="subunit">
    <text evidence="2">Core subunit of respiratory chain NADH dehydrogenase (Complex I) which is composed of 45 different subunits.</text>
</comment>
<comment type="subcellular location">
    <subcellularLocation>
        <location evidence="2">Mitochondrion inner membrane</location>
        <topology evidence="3">Multi-pass membrane protein</topology>
    </subcellularLocation>
</comment>
<comment type="similarity">
    <text evidence="4">Belongs to the complex I subunit 4 family.</text>
</comment>
<name>NU4M_CAPMR</name>
<keyword id="KW-0249">Electron transport</keyword>
<keyword id="KW-0472">Membrane</keyword>
<keyword id="KW-0496">Mitochondrion</keyword>
<keyword id="KW-0999">Mitochondrion inner membrane</keyword>
<keyword id="KW-0520">NAD</keyword>
<keyword id="KW-0679">Respiratory chain</keyword>
<keyword id="KW-1278">Translocase</keyword>
<keyword id="KW-0812">Transmembrane</keyword>
<keyword id="KW-1133">Transmembrane helix</keyword>
<keyword id="KW-0813">Transport</keyword>
<keyword id="KW-0830">Ubiquinone</keyword>
<proteinExistence type="inferred from homology"/>
<sequence>MLKFIIPTMMLMPLTWLSKNNLIWINSTTHSLLISFTSLLLFNQFNDNSLNYSLTFFSDPLSTPLLILTMWLLPLMLMASQSHLLKESLTRKKLYVTMLIVLQTLLIMMFTATELILFYIMFEATLIPTLIIITRWGNQTERLNAGLYFLFYTLTGSLPLLVALTYLQNTTGSLNFLLLQHWTQPLSPTWSNIFMWLACMMAFLVKMPLYGLHLWLPKAHVEAPIAGSMVLAAVLLKLGGYGMLRITFMLDPLTEFMAYPFLMLSLWGMIMTSSICLRQTDLKSLIAYSSVSHMALVIAAILIQTPWSYMGATALMIAHGLTSSMLFCLANSNYERIHSRIMILARGLQISLPLMATWWLLASLTNLALPPTINLIGELLTVMSIFSWSNPTIFLMGTNIVITALYSLYMLIMTQRGKHTHHINNITPSFTREHALMALHVIPLLLLSLNPKIILGPLY</sequence>
<accession>Q598S9</accession>
<organism>
    <name type="scientific">Caperea marginata</name>
    <name type="common">Pigmy right whale</name>
    <name type="synonym">Balaena marginata</name>
    <dbReference type="NCBI Taxonomy" id="27604"/>
    <lineage>
        <taxon>Eukaryota</taxon>
        <taxon>Metazoa</taxon>
        <taxon>Chordata</taxon>
        <taxon>Craniata</taxon>
        <taxon>Vertebrata</taxon>
        <taxon>Euteleostomi</taxon>
        <taxon>Mammalia</taxon>
        <taxon>Eutheria</taxon>
        <taxon>Laurasiatheria</taxon>
        <taxon>Artiodactyla</taxon>
        <taxon>Whippomorpha</taxon>
        <taxon>Cetacea</taxon>
        <taxon>Mysticeti</taxon>
        <taxon>Neobalaenidae</taxon>
        <taxon>Caperea</taxon>
    </lineage>
</organism>
<geneLocation type="mitochondrion"/>
<feature type="chain" id="PRO_0000117913" description="NADH-ubiquinone oxidoreductase chain 4">
    <location>
        <begin position="1"/>
        <end position="459"/>
    </location>
</feature>
<feature type="transmembrane region" description="Helical" evidence="3">
    <location>
        <begin position="22"/>
        <end position="42"/>
    </location>
</feature>
<feature type="transmembrane region" description="Helical" evidence="3">
    <location>
        <begin position="60"/>
        <end position="80"/>
    </location>
</feature>
<feature type="transmembrane region" description="Helical" evidence="3">
    <location>
        <begin position="92"/>
        <end position="112"/>
    </location>
</feature>
<feature type="transmembrane region" description="Helical" evidence="3">
    <location>
        <begin position="113"/>
        <end position="133"/>
    </location>
</feature>
<feature type="transmembrane region" description="Helical" evidence="3">
    <location>
        <begin position="147"/>
        <end position="167"/>
    </location>
</feature>
<feature type="transmembrane region" description="Helical" evidence="3">
    <location>
        <begin position="193"/>
        <end position="213"/>
    </location>
</feature>
<feature type="transmembrane region" description="Helical" evidence="3">
    <location>
        <begin position="224"/>
        <end position="244"/>
    </location>
</feature>
<feature type="transmembrane region" description="Helical" evidence="3">
    <location>
        <begin position="256"/>
        <end position="276"/>
    </location>
</feature>
<feature type="transmembrane region" description="Helical" evidence="3">
    <location>
        <begin position="284"/>
        <end position="303"/>
    </location>
</feature>
<feature type="transmembrane region" description="Helical" evidence="3">
    <location>
        <begin position="308"/>
        <end position="330"/>
    </location>
</feature>
<feature type="transmembrane region" description="Helical" evidence="3">
    <location>
        <begin position="350"/>
        <end position="370"/>
    </location>
</feature>
<feature type="transmembrane region" description="Helical" evidence="3">
    <location>
        <begin position="393"/>
        <end position="413"/>
    </location>
</feature>
<feature type="transmembrane region" description="Helical" evidence="3">
    <location>
        <begin position="435"/>
        <end position="455"/>
    </location>
</feature>
<evidence type="ECO:0000250" key="1">
    <source>
        <dbReference type="UniProtKB" id="P03905"/>
    </source>
</evidence>
<evidence type="ECO:0000250" key="2">
    <source>
        <dbReference type="UniProtKB" id="P03910"/>
    </source>
</evidence>
<evidence type="ECO:0000255" key="3"/>
<evidence type="ECO:0000305" key="4"/>
<reference key="1">
    <citation type="journal article" date="2005" name="Syst. Biol.">
        <title>Mitochondrial phylogenetics and evolution of mysticete whales.</title>
        <authorList>
            <person name="Sasaki T."/>
            <person name="Nikaido M."/>
            <person name="Hamilton H."/>
            <person name="Goto M."/>
            <person name="Kato H."/>
            <person name="Kanda N."/>
            <person name="Pastene L.A."/>
            <person name="Cao Y."/>
            <person name="Fordyce R.E."/>
            <person name="Hasegawa M."/>
            <person name="Okada N."/>
        </authorList>
    </citation>
    <scope>NUCLEOTIDE SEQUENCE [GENOMIC DNA]</scope>
</reference>
<protein>
    <recommendedName>
        <fullName>NADH-ubiquinone oxidoreductase chain 4</fullName>
        <ecNumber evidence="1">7.1.1.2</ecNumber>
    </recommendedName>
    <alternativeName>
        <fullName>NADH dehydrogenase subunit 4</fullName>
    </alternativeName>
</protein>
<gene>
    <name type="primary">MT-ND4</name>
    <name type="synonym">MTND4</name>
    <name type="synonym">NADH4</name>
    <name type="synonym">ND4</name>
</gene>